<proteinExistence type="inferred from homology"/>
<comment type="function">
    <text evidence="1">Participates in the degradation of poly-3-hydroxybutyrate (PHB). It works downstream of poly(3-hydroxybutyrate) depolymerase, hydrolyzing D(-)-3-hydroxybutyrate oligomers of various length (3HB-oligomers) into 3HB-monomers.</text>
</comment>
<comment type="catalytic activity">
    <reaction evidence="1">
        <text>(3R)-hydroxybutanoate dimer + H2O = 2 (R)-3-hydroxybutanoate + H(+)</text>
        <dbReference type="Rhea" id="RHEA:10172"/>
        <dbReference type="ChEBI" id="CHEBI:10979"/>
        <dbReference type="ChEBI" id="CHEBI:10983"/>
        <dbReference type="ChEBI" id="CHEBI:15377"/>
        <dbReference type="ChEBI" id="CHEBI:15378"/>
        <dbReference type="EC" id="3.1.1.22"/>
    </reaction>
</comment>
<comment type="pathway">
    <text evidence="1">Lipid metabolism; butanoate metabolism.</text>
</comment>
<comment type="subcellular location">
    <subcellularLocation>
        <location evidence="1">Secreted</location>
    </subcellularLocation>
</comment>
<comment type="similarity">
    <text evidence="1">Belongs to the D-(-)-3-hydroxybutyrate oligomer hydrolase family.</text>
</comment>
<feature type="signal peptide" evidence="1">
    <location>
        <begin position="1"/>
        <end position="26"/>
    </location>
</feature>
<feature type="chain" id="PRO_5000122736" description="D-(-)-3-hydroxybutyrate oligomer hydrolase">
    <location>
        <begin position="27"/>
        <end position="696"/>
    </location>
</feature>
<feature type="active site" description="Charge relay system" evidence="1">
    <location>
        <position position="309"/>
    </location>
</feature>
<evidence type="ECO:0000255" key="1">
    <source>
        <dbReference type="HAMAP-Rule" id="MF_01906"/>
    </source>
</evidence>
<organism>
    <name type="scientific">Burkholderia orbicola (strain AU 1054)</name>
    <dbReference type="NCBI Taxonomy" id="331271"/>
    <lineage>
        <taxon>Bacteria</taxon>
        <taxon>Pseudomonadati</taxon>
        <taxon>Pseudomonadota</taxon>
        <taxon>Betaproteobacteria</taxon>
        <taxon>Burkholderiales</taxon>
        <taxon>Burkholderiaceae</taxon>
        <taxon>Burkholderia</taxon>
        <taxon>Burkholderia cepacia complex</taxon>
        <taxon>Burkholderia orbicola</taxon>
    </lineage>
</organism>
<reference key="1">
    <citation type="submission" date="2006-05" db="EMBL/GenBank/DDBJ databases">
        <title>Complete sequence of chromosome 1 of Burkholderia cenocepacia AU 1054.</title>
        <authorList>
            <consortium name="US DOE Joint Genome Institute"/>
            <person name="Copeland A."/>
            <person name="Lucas S."/>
            <person name="Lapidus A."/>
            <person name="Barry K."/>
            <person name="Detter J.C."/>
            <person name="Glavina del Rio T."/>
            <person name="Hammon N."/>
            <person name="Israni S."/>
            <person name="Dalin E."/>
            <person name="Tice H."/>
            <person name="Pitluck S."/>
            <person name="Chain P."/>
            <person name="Malfatti S."/>
            <person name="Shin M."/>
            <person name="Vergez L."/>
            <person name="Schmutz J."/>
            <person name="Larimer F."/>
            <person name="Land M."/>
            <person name="Hauser L."/>
            <person name="Kyrpides N."/>
            <person name="Lykidis A."/>
            <person name="LiPuma J.J."/>
            <person name="Konstantinidis K."/>
            <person name="Tiedje J.M."/>
            <person name="Richardson P."/>
        </authorList>
    </citation>
    <scope>NUCLEOTIDE SEQUENCE [LARGE SCALE GENOMIC DNA]</scope>
    <source>
        <strain>AU 1054</strain>
    </source>
</reference>
<sequence>MTKLGWGRRVVWGAALAAVAMLGACNGDESAERNRLPGFVSGSVRTTAYDGASDDLLTAGLGKTGLAAATAPGFANPSRPTSAELRRLAIWSNYRALVDMSANGGYGRFWGPNVDLDGNDTLGEGKIPGTEYLAYADDGSGSKNVTLLVQVPASFNPAQPCIVTATSSGSRGVYGAISAAGEWALKRGCAVAYNDKGGGNGAHELGSDTVTLIDGTLANAVLAGTASLFTANVTSGDLAAFNSRFPNRYAFKHAHSQQNPEQDWGRVTLQSVEFAYWALNEQFGPVIDGARHGVRYRAGDITTIAASVSNGGGASLAAAEQDNRGWITAVVVGEPQINVRMAPNAVVRAGGQPVPSFGRPLADYATLANLLEPCAAASASLAGAPYLSALPATTTQSIRTQRCATLAAAGLVAGADTQSQAADALAQLHAAGYLADSDLLQAPMWDSQAIPAIAVTYANAYTRSRVTDNLCNFSFATTNPATGVVAAPAASPMPSVFGVGNGVPPTAGINLVFNDGAGTDHRLATPDASFAGALCLRQLWTNGMLGMPANVDAVRVNANLHGKPAIIVQGRSDALVPVNHASRAYVAQNGISEAGRSQLVFYEVTNGQHFDAFLSVPGFDTRFVPVHYYNVQALNLMWRHLKNGAPLPPSQVIRTVPRGGTPGAAPALTSANLPPISTAPGANAIATGVGTIDVPL</sequence>
<dbReference type="EC" id="3.1.1.22" evidence="1"/>
<dbReference type="EMBL" id="CP000378">
    <property type="protein sequence ID" value="ABF75269.1"/>
    <property type="molecule type" value="Genomic_DNA"/>
</dbReference>
<dbReference type="HOGENOM" id="CLU_420258_0_0_4"/>
<dbReference type="UniPathway" id="UPA00863"/>
<dbReference type="GO" id="GO:0005615">
    <property type="term" value="C:extracellular space"/>
    <property type="evidence" value="ECO:0007669"/>
    <property type="project" value="InterPro"/>
</dbReference>
<dbReference type="GO" id="GO:0047989">
    <property type="term" value="F:hydroxybutyrate-dimer hydrolase activity"/>
    <property type="evidence" value="ECO:0007669"/>
    <property type="project" value="UniProtKB-UniRule"/>
</dbReference>
<dbReference type="GO" id="GO:0019605">
    <property type="term" value="P:butyrate metabolic process"/>
    <property type="evidence" value="ECO:0007669"/>
    <property type="project" value="UniProtKB-UniRule"/>
</dbReference>
<dbReference type="HAMAP" id="MF_01906">
    <property type="entry name" value="3HBOH"/>
    <property type="match status" value="1"/>
</dbReference>
<dbReference type="InterPro" id="IPR016582">
    <property type="entry name" value="OHBut_olig_hydro_put"/>
</dbReference>
<dbReference type="Pfam" id="PF10605">
    <property type="entry name" value="3HBOH"/>
    <property type="match status" value="1"/>
</dbReference>
<dbReference type="PIRSF" id="PIRSF011409">
    <property type="entry name" value="HObutyrate_olig_hydrol"/>
    <property type="match status" value="1"/>
</dbReference>
<protein>
    <recommendedName>
        <fullName evidence="1">D-(-)-3-hydroxybutyrate oligomer hydrolase</fullName>
        <shortName evidence="1">3HB-oligomer hydrolase</shortName>
        <shortName evidence="1">3HBOH</shortName>
        <ecNumber evidence="1">3.1.1.22</ecNumber>
    </recommendedName>
</protein>
<keyword id="KW-0378">Hydrolase</keyword>
<keyword id="KW-0964">Secreted</keyword>
<keyword id="KW-0732">Signal</keyword>
<name>HBOH_BURO1</name>
<accession>Q1BYN6</accession>
<gene>
    <name type="ordered locus">Bcen_0357</name>
</gene>